<feature type="chain" id="PRO_0000309152" description="Serine/threonine transporter SstT">
    <location>
        <begin position="1"/>
        <end position="405"/>
    </location>
</feature>
<feature type="transmembrane region" description="Helical" evidence="1">
    <location>
        <begin position="13"/>
        <end position="33"/>
    </location>
</feature>
<feature type="transmembrane region" description="Helical" evidence="1">
    <location>
        <begin position="43"/>
        <end position="63"/>
    </location>
</feature>
<feature type="transmembrane region" description="Helical" evidence="1">
    <location>
        <begin position="81"/>
        <end position="101"/>
    </location>
</feature>
<feature type="transmembrane region" description="Helical" evidence="1">
    <location>
        <begin position="140"/>
        <end position="160"/>
    </location>
</feature>
<feature type="transmembrane region" description="Helical" evidence="1">
    <location>
        <begin position="191"/>
        <end position="211"/>
    </location>
</feature>
<feature type="transmembrane region" description="Helical" evidence="1">
    <location>
        <begin position="215"/>
        <end position="235"/>
    </location>
</feature>
<feature type="transmembrane region" description="Helical" evidence="1">
    <location>
        <begin position="297"/>
        <end position="317"/>
    </location>
</feature>
<feature type="transmembrane region" description="Helical" evidence="1">
    <location>
        <begin position="338"/>
        <end position="358"/>
    </location>
</feature>
<feature type="transmembrane region" description="Helical" evidence="1">
    <location>
        <begin position="362"/>
        <end position="382"/>
    </location>
</feature>
<accession>Q9KNC9</accession>
<name>SSTT_VIBCH</name>
<sequence length="405" mass="42317">MQNNSFLARLVRGNLVLQILAGILLGAAMATFSPEYAQKVGLIGNLFVGALKAVAPVLVFILVASSIANQKKNQHTYMRPIVVLYLFGTFSAALTAVILSFLFPTTLVLATGAEGATPPQGIAEVLNTLLFKLVDNPVSALMNANYIGILAWGVGLGLALHHSSSTTKAVFEDLSHGISQIVRFIIRLAPFGIFGLVASTFATTGFDALAGYAQLLAVLLGAMAFIALVVNPMIVYYKIRRNPFPLVLQCLRESGVTAFFTRSSAANIPVNMALCEKLKLDEDTYSVSIPLGATINMAGAAITITVLTLAAVHTMGIEVDLMTALLLSVVAAVSACGASGVAGGSLLLIPLACGLFGISNDIAMQVVAVGFIIGVIQDSAETALNSSTDVLFTAAVCQAEHEKRA</sequence>
<protein>
    <recommendedName>
        <fullName evidence="1">Serine/threonine transporter SstT</fullName>
    </recommendedName>
    <alternativeName>
        <fullName evidence="1">Na(+)/serine-threonine symporter</fullName>
    </alternativeName>
</protein>
<organism>
    <name type="scientific">Vibrio cholerae serotype O1 (strain ATCC 39315 / El Tor Inaba N16961)</name>
    <dbReference type="NCBI Taxonomy" id="243277"/>
    <lineage>
        <taxon>Bacteria</taxon>
        <taxon>Pseudomonadati</taxon>
        <taxon>Pseudomonadota</taxon>
        <taxon>Gammaproteobacteria</taxon>
        <taxon>Vibrionales</taxon>
        <taxon>Vibrionaceae</taxon>
        <taxon>Vibrio</taxon>
    </lineage>
</organism>
<reference key="1">
    <citation type="journal article" date="2000" name="Nature">
        <title>DNA sequence of both chromosomes of the cholera pathogen Vibrio cholerae.</title>
        <authorList>
            <person name="Heidelberg J.F."/>
            <person name="Eisen J.A."/>
            <person name="Nelson W.C."/>
            <person name="Clayton R.A."/>
            <person name="Gwinn M.L."/>
            <person name="Dodson R.J."/>
            <person name="Haft D.H."/>
            <person name="Hickey E.K."/>
            <person name="Peterson J.D."/>
            <person name="Umayam L.A."/>
            <person name="Gill S.R."/>
            <person name="Nelson K.E."/>
            <person name="Read T.D."/>
            <person name="Tettelin H."/>
            <person name="Richardson D.L."/>
            <person name="Ermolaeva M.D."/>
            <person name="Vamathevan J.J."/>
            <person name="Bass S."/>
            <person name="Qin H."/>
            <person name="Dragoi I."/>
            <person name="Sellers P."/>
            <person name="McDonald L.A."/>
            <person name="Utterback T.R."/>
            <person name="Fleischmann R.D."/>
            <person name="Nierman W.C."/>
            <person name="White O."/>
            <person name="Salzberg S.L."/>
            <person name="Smith H.O."/>
            <person name="Colwell R.R."/>
            <person name="Mekalanos J.J."/>
            <person name="Venter J.C."/>
            <person name="Fraser C.M."/>
        </authorList>
    </citation>
    <scope>NUCLEOTIDE SEQUENCE [LARGE SCALE GENOMIC DNA]</scope>
    <source>
        <strain>ATCC 39315 / El Tor Inaba N16961</strain>
    </source>
</reference>
<proteinExistence type="inferred from homology"/>
<evidence type="ECO:0000255" key="1">
    <source>
        <dbReference type="HAMAP-Rule" id="MF_01582"/>
    </source>
</evidence>
<dbReference type="EMBL" id="AE003853">
    <property type="protein sequence ID" value="AAF95950.1"/>
    <property type="molecule type" value="Genomic_DNA"/>
</dbReference>
<dbReference type="PIR" id="B82509">
    <property type="entry name" value="B82509"/>
</dbReference>
<dbReference type="RefSeq" id="NP_232437.1">
    <property type="nucleotide sequence ID" value="NC_002506.1"/>
</dbReference>
<dbReference type="RefSeq" id="WP_001180737.1">
    <property type="nucleotide sequence ID" value="NZ_LT906615.1"/>
</dbReference>
<dbReference type="SMR" id="Q9KNC9"/>
<dbReference type="STRING" id="243277.VC_A0036"/>
<dbReference type="DNASU" id="2612449"/>
<dbReference type="EnsemblBacteria" id="AAF95950">
    <property type="protein sequence ID" value="AAF95950"/>
    <property type="gene ID" value="VC_A0036"/>
</dbReference>
<dbReference type="KEGG" id="vch:VC_A0036"/>
<dbReference type="PATRIC" id="fig|243277.26.peg.2682"/>
<dbReference type="eggNOG" id="COG3633">
    <property type="taxonomic scope" value="Bacteria"/>
</dbReference>
<dbReference type="HOGENOM" id="CLU_044581_0_0_6"/>
<dbReference type="Proteomes" id="UP000000584">
    <property type="component" value="Chromosome 2"/>
</dbReference>
<dbReference type="GO" id="GO:0005886">
    <property type="term" value="C:plasma membrane"/>
    <property type="evidence" value="ECO:0000318"/>
    <property type="project" value="GO_Central"/>
</dbReference>
<dbReference type="GO" id="GO:0005295">
    <property type="term" value="F:neutral L-amino acid:sodium symporter activity"/>
    <property type="evidence" value="ECO:0000318"/>
    <property type="project" value="GO_Central"/>
</dbReference>
<dbReference type="GO" id="GO:0032329">
    <property type="term" value="P:serine transport"/>
    <property type="evidence" value="ECO:0000318"/>
    <property type="project" value="GO_Central"/>
</dbReference>
<dbReference type="GO" id="GO:0015826">
    <property type="term" value="P:threonine transport"/>
    <property type="evidence" value="ECO:0007669"/>
    <property type="project" value="InterPro"/>
</dbReference>
<dbReference type="FunFam" id="1.10.3860.10:FF:000003">
    <property type="entry name" value="Serine/threonine transporter sstT"/>
    <property type="match status" value="1"/>
</dbReference>
<dbReference type="Gene3D" id="1.10.3860.10">
    <property type="entry name" value="Sodium:dicarboxylate symporter"/>
    <property type="match status" value="1"/>
</dbReference>
<dbReference type="HAMAP" id="MF_01582">
    <property type="entry name" value="Ser_Thr_transp_SstT"/>
    <property type="match status" value="1"/>
</dbReference>
<dbReference type="InterPro" id="IPR001991">
    <property type="entry name" value="Na-dicarboxylate_symporter"/>
</dbReference>
<dbReference type="InterPro" id="IPR036458">
    <property type="entry name" value="Na:dicarbo_symporter_sf"/>
</dbReference>
<dbReference type="InterPro" id="IPR023025">
    <property type="entry name" value="Ser_Thr_transp_SstT"/>
</dbReference>
<dbReference type="NCBIfam" id="NF010151">
    <property type="entry name" value="PRK13628.1"/>
    <property type="match status" value="1"/>
</dbReference>
<dbReference type="PANTHER" id="PTHR42865">
    <property type="entry name" value="PROTON/GLUTAMATE-ASPARTATE SYMPORTER"/>
    <property type="match status" value="1"/>
</dbReference>
<dbReference type="PANTHER" id="PTHR42865:SF8">
    <property type="entry name" value="SERINE_THREONINE TRANSPORTER SSTT"/>
    <property type="match status" value="1"/>
</dbReference>
<dbReference type="Pfam" id="PF00375">
    <property type="entry name" value="SDF"/>
    <property type="match status" value="1"/>
</dbReference>
<dbReference type="PRINTS" id="PR00173">
    <property type="entry name" value="EDTRNSPORT"/>
</dbReference>
<dbReference type="SUPFAM" id="SSF118215">
    <property type="entry name" value="Proton glutamate symport protein"/>
    <property type="match status" value="1"/>
</dbReference>
<keyword id="KW-0029">Amino-acid transport</keyword>
<keyword id="KW-0997">Cell inner membrane</keyword>
<keyword id="KW-1003">Cell membrane</keyword>
<keyword id="KW-0472">Membrane</keyword>
<keyword id="KW-1185">Reference proteome</keyword>
<keyword id="KW-0769">Symport</keyword>
<keyword id="KW-0812">Transmembrane</keyword>
<keyword id="KW-1133">Transmembrane helix</keyword>
<keyword id="KW-0813">Transport</keyword>
<gene>
    <name evidence="1" type="primary">sstT</name>
    <name type="ordered locus">VC_A0036</name>
</gene>
<comment type="function">
    <text evidence="1">Involved in the import of serine and threonine into the cell, with the concomitant import of sodium (symport system).</text>
</comment>
<comment type="catalytic activity">
    <reaction evidence="1">
        <text>L-serine(in) + Na(+)(in) = L-serine(out) + Na(+)(out)</text>
        <dbReference type="Rhea" id="RHEA:29575"/>
        <dbReference type="ChEBI" id="CHEBI:29101"/>
        <dbReference type="ChEBI" id="CHEBI:33384"/>
    </reaction>
    <physiologicalReaction direction="right-to-left" evidence="1">
        <dbReference type="Rhea" id="RHEA:29577"/>
    </physiologicalReaction>
</comment>
<comment type="catalytic activity">
    <reaction evidence="1">
        <text>L-threonine(in) + Na(+)(in) = L-threonine(out) + Na(+)(out)</text>
        <dbReference type="Rhea" id="RHEA:69999"/>
        <dbReference type="ChEBI" id="CHEBI:29101"/>
        <dbReference type="ChEBI" id="CHEBI:57926"/>
    </reaction>
    <physiologicalReaction direction="right-to-left" evidence="1">
        <dbReference type="Rhea" id="RHEA:70001"/>
    </physiologicalReaction>
</comment>
<comment type="subcellular location">
    <subcellularLocation>
        <location evidence="1">Cell inner membrane</location>
        <topology evidence="1">Multi-pass membrane protein</topology>
    </subcellularLocation>
</comment>
<comment type="similarity">
    <text evidence="1">Belongs to the dicarboxylate/amino acid:cation symporter (DAACS) (TC 2.A.23) family.</text>
</comment>